<sequence length="730" mass="81029">MASGRGASSRWFFTREQLENTPSRRCGVEADKELSCRQQAANLIQEMGQRLNVSQLTINTAIVYMHRFYMHHSFTKFNKNIISSTALFLAAKVEEQARKLEHVIKVAHACLHPLEPLLDTKCDAYLQQTQELVILETIMLQTLGFEITIEHPHTDVVKCTQLVRASKDLAQTSYFMATNSLHLTTFCLQYKPTVIACVCIHLACKWSNWEIPVSTDGKHWWEYVDPTVTLELLDELTHEFLQILEKTPNRLKKIRNWRANQAARKPKVDGQVSETPLLGSSLVQNSILVDSVTGVPTNPSFQKPSTSAFPAPVPLNSGNISVQDSHTSDNLSMLATGMPSTSYGLSSHQEWPQHQDSARTEQLYSQKQETSLSGSQYNINFQQGPSISLHSGLHHRPDKISDHSSVKQEYTHKAGSSKHHGPISTTPGIIPQKMSLDKYREKRKLETLDLDVRDHYIAAQVEQQHKQGQSQAASSSSVTSPIKMKIPIANTEKYMADKKEKSGSLKLRIPIPPTDKSASKEELKMKIKVSSSERHSSSDEGSGKSKHSSPHISRDHKEKHKEHPSSRHHTSSHKHSHSHSGSSSGGSKHSADGIPPTVLRSPVGLSSDGISSSSSSSRKRLHVNDASHNHHSKMSKSSKSSGSSSSSSSSVKQYISSHNSVFNHPLPPPPPVTYQVGYGHLSTLVKLDKKPVETNGPDANHEYSTSSQHMDYKDTFDMLDSLLSAQGMNM</sequence>
<keyword id="KW-0002">3D-structure</keyword>
<keyword id="KW-0025">Alternative splicing</keyword>
<keyword id="KW-0131">Cell cycle</keyword>
<keyword id="KW-0132">Cell division</keyword>
<keyword id="KW-0195">Cyclin</keyword>
<keyword id="KW-0963">Cytoplasm</keyword>
<keyword id="KW-0945">Host-virus interaction</keyword>
<keyword id="KW-1017">Isopeptide bond</keyword>
<keyword id="KW-0539">Nucleus</keyword>
<keyword id="KW-0597">Phosphoprotein</keyword>
<keyword id="KW-1267">Proteomics identification</keyword>
<keyword id="KW-1185">Reference proteome</keyword>
<keyword id="KW-0804">Transcription</keyword>
<keyword id="KW-0805">Transcription regulation</keyword>
<keyword id="KW-0832">Ubl conjugation</keyword>
<accession>O60583</accession>
<accession>A8KA48</accession>
<accession>D3DP73</accession>
<accession>D3DP74</accession>
<accession>O60582</accession>
<accession>Q29R66</accession>
<accession>Q53SR4</accession>
<accession>Q5I1Y0</accession>
<comment type="function">
    <text evidence="1 5 7 8 12">Regulatory subunit of the cyclin-dependent kinase pair (CDK9/cyclin T) complex, also called positive transcription elongation factor B (P-TEFB), which is proposed to facilitate the transition from abortive to production elongation by phosphorylating the CTD (carboxy-terminal domain) of the large subunit of RNA polymerase II (RNAP II) (PubMed:15563843, PubMed:9499409). The activity of this complex is regulated by binding with 7SK snRNA (PubMed:11713533). Plays a role during muscle differentiation; P-TEFB complex interacts with MYOD1; this tripartite complex promotes the transcriptional activity of MYOD1 through its CDK9-mediated phosphorylation and binds the chromatin of promoters and enhancers of muscle-specific genes; this event correlates with hyperphosphorylation of the CTD domain of RNA pol II (By similarity). In addition, enhances MYOD1-dependent transcription through interaction with PKN1 (PubMed:16331689). Involved in early embryo development (By similarity).</text>
</comment>
<comment type="function">
    <text evidence="11">(Microbial infection) Promotes transcriptional activation of early and late herpes simplex virus 1/HHV-1 promoters.</text>
</comment>
<comment type="subunit">
    <text evidence="1 6 7 8 9 10 11 12">Interacts with CDK9 to form P-TEFb (PubMed:16331689, PubMed:9499409). Interacts with POLR2A (via the C-terminal domain (CTD)); mediates transcriptional activity (PubMed:15563843). Interacts with HEXIM1; mediates formation of a tripartite complex with KPNA2. Interacts with HEXIM2 (PubMed:19883659). Interacts with PKN1; enhances MYOD1-dependent transcription (PubMed:16331689). P-TEFB complex interacts with RB1; promotes phosphorylation of RB1 (PubMed:12037672). P-TEFB complex interacts with MYOD1; promotes the transcriptional activity of MYOD1 through its CDK9-mediated phosphorylation (By similarity). Interacts with MDFI and MDFIC (PubMed:17289077). Interacts with MON1B; down-regulates CCNT2-mediated activation of viral promoters during herpes simplex virus 1/HHV-1 infection (PubMed:21509660).</text>
</comment>
<comment type="subunit">
    <text evidence="4">(Microbial infection) Interacts with HIV-2 and SIV Tat. Does not bind efficiently to the transactivation domain of the HIV-1 Tat (PubMed:10364329).</text>
</comment>
<comment type="interaction">
    <interactant intactId="EBI-2836757">
        <id>O60583</id>
    </interactant>
    <interactant intactId="EBI-1383449">
        <id>P50750</id>
        <label>CDK9</label>
    </interactant>
    <organismsDiffer>false</organismsDiffer>
    <experiments>10</experiments>
</comment>
<comment type="interaction">
    <interactant intactId="EBI-9077118">
        <id>O60583-1</id>
    </interactant>
    <interactant intactId="EBI-1383449">
        <id>P50750</id>
        <label>CDK9</label>
    </interactant>
    <organismsDiffer>false</organismsDiffer>
    <experiments>3</experiments>
</comment>
<comment type="interaction">
    <interactant intactId="EBI-9077112">
        <id>O60583-2</id>
    </interactant>
    <interactant intactId="EBI-1383449">
        <id>P50750</id>
        <label>CDK9</label>
    </interactant>
    <organismsDiffer>false</organismsDiffer>
    <experiments>2</experiments>
</comment>
<comment type="subcellular location">
    <subcellularLocation>
        <location evidence="1">Cytoplasm</location>
        <location evidence="1">Perinuclear region</location>
    </subcellularLocation>
    <subcellularLocation>
        <location evidence="1">Nucleus</location>
    </subcellularLocation>
    <text evidence="1">Nucleus in differentiating cells.</text>
</comment>
<comment type="alternative products">
    <event type="alternative splicing"/>
    <isoform>
        <id>O60583-1</id>
        <name>1</name>
        <name>B</name>
        <sequence type="displayed"/>
    </isoform>
    <isoform>
        <id>O60583-2</id>
        <name>2</name>
        <name>A</name>
        <sequence type="described" ref="VSP_001258"/>
    </isoform>
</comment>
<comment type="tissue specificity">
    <text evidence="12">Ubiquitously expressed.</text>
</comment>
<comment type="similarity">
    <text evidence="15">Belongs to the cyclin family. Cyclin C subfamily.</text>
</comment>
<protein>
    <recommendedName>
        <fullName evidence="1">Cyclin-T2</fullName>
        <shortName evidence="1">CycT2</shortName>
    </recommendedName>
</protein>
<organism>
    <name type="scientific">Homo sapiens</name>
    <name type="common">Human</name>
    <dbReference type="NCBI Taxonomy" id="9606"/>
    <lineage>
        <taxon>Eukaryota</taxon>
        <taxon>Metazoa</taxon>
        <taxon>Chordata</taxon>
        <taxon>Craniata</taxon>
        <taxon>Vertebrata</taxon>
        <taxon>Euteleostomi</taxon>
        <taxon>Mammalia</taxon>
        <taxon>Eutheria</taxon>
        <taxon>Euarchontoglires</taxon>
        <taxon>Primates</taxon>
        <taxon>Haplorrhini</taxon>
        <taxon>Catarrhini</taxon>
        <taxon>Hominidae</taxon>
        <taxon>Homo</taxon>
    </lineage>
</organism>
<evidence type="ECO:0000250" key="1">
    <source>
        <dbReference type="UniProtKB" id="Q7TQK0"/>
    </source>
</evidence>
<evidence type="ECO:0000255" key="2"/>
<evidence type="ECO:0000256" key="3">
    <source>
        <dbReference type="SAM" id="MobiDB-lite"/>
    </source>
</evidence>
<evidence type="ECO:0000269" key="4">
    <source>
    </source>
</evidence>
<evidence type="ECO:0000269" key="5">
    <source>
    </source>
</evidence>
<evidence type="ECO:0000269" key="6">
    <source>
    </source>
</evidence>
<evidence type="ECO:0000269" key="7">
    <source>
    </source>
</evidence>
<evidence type="ECO:0000269" key="8">
    <source>
    </source>
</evidence>
<evidence type="ECO:0000269" key="9">
    <source>
    </source>
</evidence>
<evidence type="ECO:0000269" key="10">
    <source>
    </source>
</evidence>
<evidence type="ECO:0000269" key="11">
    <source>
    </source>
</evidence>
<evidence type="ECO:0000269" key="12">
    <source>
    </source>
</evidence>
<evidence type="ECO:0000303" key="13">
    <source>
    </source>
</evidence>
<evidence type="ECO:0000303" key="14">
    <source>
    </source>
</evidence>
<evidence type="ECO:0000305" key="15"/>
<evidence type="ECO:0000312" key="16">
    <source>
        <dbReference type="HGNC" id="HGNC:1600"/>
    </source>
</evidence>
<evidence type="ECO:0007744" key="17">
    <source>
    </source>
</evidence>
<evidence type="ECO:0007744" key="18">
    <source>
    </source>
</evidence>
<evidence type="ECO:0007744" key="19">
    <source>
    </source>
</evidence>
<evidence type="ECO:0007744" key="20">
    <source>
    </source>
</evidence>
<evidence type="ECO:0007744" key="21">
    <source>
    </source>
</evidence>
<evidence type="ECO:0007744" key="22">
    <source>
    </source>
</evidence>
<evidence type="ECO:0007829" key="23">
    <source>
        <dbReference type="PDB" id="2IVX"/>
    </source>
</evidence>
<feature type="chain" id="PRO_0000080495" description="Cyclin-T2">
    <location>
        <begin position="1"/>
        <end position="730"/>
    </location>
</feature>
<feature type="domain" description="Cyclin N-terminal" evidence="2">
    <location>
        <begin position="12"/>
        <end position="147"/>
    </location>
</feature>
<feature type="region of interest" description="Interaction with MDFIC and MDFI" evidence="9">
    <location>
        <begin position="1"/>
        <end position="300"/>
    </location>
</feature>
<feature type="region of interest" description="Interaction with POLR2A" evidence="7">
    <location>
        <begin position="250"/>
        <end position="300"/>
    </location>
</feature>
<feature type="region of interest" description="Disordered" evidence="3">
    <location>
        <begin position="341"/>
        <end position="430"/>
    </location>
</feature>
<feature type="region of interest" description="Disordered" evidence="3">
    <location>
        <begin position="497"/>
        <end position="652"/>
    </location>
</feature>
<feature type="compositionally biased region" description="Polar residues" evidence="3">
    <location>
        <begin position="341"/>
        <end position="350"/>
    </location>
</feature>
<feature type="compositionally biased region" description="Polar residues" evidence="3">
    <location>
        <begin position="360"/>
        <end position="389"/>
    </location>
</feature>
<feature type="compositionally biased region" description="Basic and acidic residues" evidence="3">
    <location>
        <begin position="398"/>
        <end position="412"/>
    </location>
</feature>
<feature type="compositionally biased region" description="Basic and acidic residues" evidence="3">
    <location>
        <begin position="517"/>
        <end position="543"/>
    </location>
</feature>
<feature type="compositionally biased region" description="Basic and acidic residues" evidence="3">
    <location>
        <begin position="552"/>
        <end position="565"/>
    </location>
</feature>
<feature type="compositionally biased region" description="Basic residues" evidence="3">
    <location>
        <begin position="566"/>
        <end position="578"/>
    </location>
</feature>
<feature type="compositionally biased region" description="Low complexity" evidence="3">
    <location>
        <begin position="579"/>
        <end position="588"/>
    </location>
</feature>
<feature type="compositionally biased region" description="Low complexity" evidence="3">
    <location>
        <begin position="606"/>
        <end position="616"/>
    </location>
</feature>
<feature type="compositionally biased region" description="Low complexity" evidence="3">
    <location>
        <begin position="637"/>
        <end position="652"/>
    </location>
</feature>
<feature type="modified residue" description="Phosphoserine" evidence="20 21">
    <location>
        <position position="480"/>
    </location>
</feature>
<feature type="modified residue" description="Phosphoserine" evidence="17 18 19">
    <location>
        <position position="601"/>
    </location>
</feature>
<feature type="cross-link" description="Glycyl lysine isopeptide (Lys-Gly) (interchain with G-Cter in SUMO2)" evidence="22">
    <location>
        <position position="407"/>
    </location>
</feature>
<feature type="splice variant" id="VSP_001258" description="In isoform 2." evidence="13 14">
    <original>SSSSSSSSVKQYISSHNSVFNHPLPPPPPVTYQVGYGHLSTLVKLDKKPVETNGPDANHEYSTSSQHMDYKDTFDMLDSLLSAQGMNM</original>
    <variation>GLRTSQHPRETGQEASGDQRS</variation>
    <location>
        <begin position="643"/>
        <end position="730"/>
    </location>
</feature>
<feature type="mutagenesis site" description="Activation of HIV-1 Tat function." evidence="4">
    <original>N</original>
    <variation>C</variation>
    <location>
        <position position="260"/>
    </location>
</feature>
<feature type="sequence conflict" description="In Ref. 1; AAC39666." evidence="15" ref="1">
    <original>S</original>
    <variation>C</variation>
    <location>
        <position position="682"/>
    </location>
</feature>
<feature type="helix" evidence="23">
    <location>
        <begin position="9"/>
        <end position="11"/>
    </location>
</feature>
<feature type="helix" evidence="23">
    <location>
        <begin position="15"/>
        <end position="19"/>
    </location>
</feature>
<feature type="helix" evidence="23">
    <location>
        <begin position="22"/>
        <end position="25"/>
    </location>
</feature>
<feature type="helix" evidence="23">
    <location>
        <begin position="30"/>
        <end position="50"/>
    </location>
</feature>
<feature type="helix" evidence="23">
    <location>
        <begin position="55"/>
        <end position="68"/>
    </location>
</feature>
<feature type="turn" evidence="23">
    <location>
        <begin position="69"/>
        <end position="71"/>
    </location>
</feature>
<feature type="turn" evidence="23">
    <location>
        <begin position="74"/>
        <end position="76"/>
    </location>
</feature>
<feature type="helix" evidence="23">
    <location>
        <begin position="79"/>
        <end position="93"/>
    </location>
</feature>
<feature type="helix" evidence="23">
    <location>
        <begin position="100"/>
        <end position="111"/>
    </location>
</feature>
<feature type="helix" evidence="23">
    <location>
        <begin position="123"/>
        <end position="142"/>
    </location>
</feature>
<feature type="turn" evidence="23">
    <location>
        <begin position="143"/>
        <end position="145"/>
    </location>
</feature>
<feature type="helix" evidence="23">
    <location>
        <begin position="152"/>
        <end position="162"/>
    </location>
</feature>
<feature type="helix" evidence="23">
    <location>
        <begin position="167"/>
        <end position="183"/>
    </location>
</feature>
<feature type="helix" evidence="23">
    <location>
        <begin position="186"/>
        <end position="188"/>
    </location>
</feature>
<feature type="helix" evidence="23">
    <location>
        <begin position="192"/>
        <end position="207"/>
    </location>
</feature>
<feature type="helix" evidence="23">
    <location>
        <begin position="220"/>
        <end position="223"/>
    </location>
</feature>
<feature type="helix" evidence="23">
    <location>
        <begin position="230"/>
        <end position="245"/>
    </location>
</feature>
<feature type="helix" evidence="23">
    <location>
        <begin position="248"/>
        <end position="261"/>
    </location>
</feature>
<reference key="1">
    <citation type="journal article" date="1998" name="Genes Dev.">
        <title>Identification of multiple cyclin subunits of human P-TEFb.</title>
        <authorList>
            <person name="Peng J.-M."/>
            <person name="Zhu Y."/>
            <person name="Milton J.T."/>
            <person name="Price D.H."/>
        </authorList>
    </citation>
    <scope>NUCLEOTIDE SEQUENCE [MRNA] (ISOFORMS 1 AND 2)</scope>
    <scope>INTERACTION WITH CDK9</scope>
    <scope>IDENTIFICATION OF P-TEFB COMPLEX</scope>
    <scope>TISSUE SPECIFICITY</scope>
    <scope>FUNCTION OF P-TEFB COMPLEX</scope>
    <source>
        <tissue>Brain</tissue>
    </source>
</reference>
<reference key="2">
    <citation type="submission" date="2004-12" db="EMBL/GenBank/DDBJ databases">
        <authorList>
            <consortium name="NIEHS SNPs program"/>
        </authorList>
    </citation>
    <scope>NUCLEOTIDE SEQUENCE [GENOMIC DNA]</scope>
</reference>
<reference key="3">
    <citation type="journal article" date="2004" name="Nat. Genet.">
        <title>Complete sequencing and characterization of 21,243 full-length human cDNAs.</title>
        <authorList>
            <person name="Ota T."/>
            <person name="Suzuki Y."/>
            <person name="Nishikawa T."/>
            <person name="Otsuki T."/>
            <person name="Sugiyama T."/>
            <person name="Irie R."/>
            <person name="Wakamatsu A."/>
            <person name="Hayashi K."/>
            <person name="Sato H."/>
            <person name="Nagai K."/>
            <person name="Kimura K."/>
            <person name="Makita H."/>
            <person name="Sekine M."/>
            <person name="Obayashi M."/>
            <person name="Nishi T."/>
            <person name="Shibahara T."/>
            <person name="Tanaka T."/>
            <person name="Ishii S."/>
            <person name="Yamamoto J."/>
            <person name="Saito K."/>
            <person name="Kawai Y."/>
            <person name="Isono Y."/>
            <person name="Nakamura Y."/>
            <person name="Nagahari K."/>
            <person name="Murakami K."/>
            <person name="Yasuda T."/>
            <person name="Iwayanagi T."/>
            <person name="Wagatsuma M."/>
            <person name="Shiratori A."/>
            <person name="Sudo H."/>
            <person name="Hosoiri T."/>
            <person name="Kaku Y."/>
            <person name="Kodaira H."/>
            <person name="Kondo H."/>
            <person name="Sugawara M."/>
            <person name="Takahashi M."/>
            <person name="Kanda K."/>
            <person name="Yokoi T."/>
            <person name="Furuya T."/>
            <person name="Kikkawa E."/>
            <person name="Omura Y."/>
            <person name="Abe K."/>
            <person name="Kamihara K."/>
            <person name="Katsuta N."/>
            <person name="Sato K."/>
            <person name="Tanikawa M."/>
            <person name="Yamazaki M."/>
            <person name="Ninomiya K."/>
            <person name="Ishibashi T."/>
            <person name="Yamashita H."/>
            <person name="Murakawa K."/>
            <person name="Fujimori K."/>
            <person name="Tanai H."/>
            <person name="Kimata M."/>
            <person name="Watanabe M."/>
            <person name="Hiraoka S."/>
            <person name="Chiba Y."/>
            <person name="Ishida S."/>
            <person name="Ono Y."/>
            <person name="Takiguchi S."/>
            <person name="Watanabe S."/>
            <person name="Yosida M."/>
            <person name="Hotuta T."/>
            <person name="Kusano J."/>
            <person name="Kanehori K."/>
            <person name="Takahashi-Fujii A."/>
            <person name="Hara H."/>
            <person name="Tanase T.-O."/>
            <person name="Nomura Y."/>
            <person name="Togiya S."/>
            <person name="Komai F."/>
            <person name="Hara R."/>
            <person name="Takeuchi K."/>
            <person name="Arita M."/>
            <person name="Imose N."/>
            <person name="Musashino K."/>
            <person name="Yuuki H."/>
            <person name="Oshima A."/>
            <person name="Sasaki N."/>
            <person name="Aotsuka S."/>
            <person name="Yoshikawa Y."/>
            <person name="Matsunawa H."/>
            <person name="Ichihara T."/>
            <person name="Shiohata N."/>
            <person name="Sano S."/>
            <person name="Moriya S."/>
            <person name="Momiyama H."/>
            <person name="Satoh N."/>
            <person name="Takami S."/>
            <person name="Terashima Y."/>
            <person name="Suzuki O."/>
            <person name="Nakagawa S."/>
            <person name="Senoh A."/>
            <person name="Mizoguchi H."/>
            <person name="Goto Y."/>
            <person name="Shimizu F."/>
            <person name="Wakebe H."/>
            <person name="Hishigaki H."/>
            <person name="Watanabe T."/>
            <person name="Sugiyama A."/>
            <person name="Takemoto M."/>
            <person name="Kawakami B."/>
            <person name="Yamazaki M."/>
            <person name="Watanabe K."/>
            <person name="Kumagai A."/>
            <person name="Itakura S."/>
            <person name="Fukuzumi Y."/>
            <person name="Fujimori Y."/>
            <person name="Komiyama M."/>
            <person name="Tashiro H."/>
            <person name="Tanigami A."/>
            <person name="Fujiwara T."/>
            <person name="Ono T."/>
            <person name="Yamada K."/>
            <person name="Fujii Y."/>
            <person name="Ozaki K."/>
            <person name="Hirao M."/>
            <person name="Ohmori Y."/>
            <person name="Kawabata A."/>
            <person name="Hikiji T."/>
            <person name="Kobatake N."/>
            <person name="Inagaki H."/>
            <person name="Ikema Y."/>
            <person name="Okamoto S."/>
            <person name="Okitani R."/>
            <person name="Kawakami T."/>
            <person name="Noguchi S."/>
            <person name="Itoh T."/>
            <person name="Shigeta K."/>
            <person name="Senba T."/>
            <person name="Matsumura K."/>
            <person name="Nakajima Y."/>
            <person name="Mizuno T."/>
            <person name="Morinaga M."/>
            <person name="Sasaki M."/>
            <person name="Togashi T."/>
            <person name="Oyama M."/>
            <person name="Hata H."/>
            <person name="Watanabe M."/>
            <person name="Komatsu T."/>
            <person name="Mizushima-Sugano J."/>
            <person name="Satoh T."/>
            <person name="Shirai Y."/>
            <person name="Takahashi Y."/>
            <person name="Nakagawa K."/>
            <person name="Okumura K."/>
            <person name="Nagase T."/>
            <person name="Nomura N."/>
            <person name="Kikuchi H."/>
            <person name="Masuho Y."/>
            <person name="Yamashita R."/>
            <person name="Nakai K."/>
            <person name="Yada T."/>
            <person name="Nakamura Y."/>
            <person name="Ohara O."/>
            <person name="Isogai T."/>
            <person name="Sugano S."/>
        </authorList>
    </citation>
    <scope>NUCLEOTIDE SEQUENCE [LARGE SCALE MRNA] (ISOFORM 1)</scope>
    <source>
        <tissue>Trachea</tissue>
    </source>
</reference>
<reference key="4">
    <citation type="journal article" date="2005" name="Nature">
        <title>Generation and annotation of the DNA sequences of human chromosomes 2 and 4.</title>
        <authorList>
            <person name="Hillier L.W."/>
            <person name="Graves T.A."/>
            <person name="Fulton R.S."/>
            <person name="Fulton L.A."/>
            <person name="Pepin K.H."/>
            <person name="Minx P."/>
            <person name="Wagner-McPherson C."/>
            <person name="Layman D."/>
            <person name="Wylie K."/>
            <person name="Sekhon M."/>
            <person name="Becker M.C."/>
            <person name="Fewell G.A."/>
            <person name="Delehaunty K.D."/>
            <person name="Miner T.L."/>
            <person name="Nash W.E."/>
            <person name="Kremitzki C."/>
            <person name="Oddy L."/>
            <person name="Du H."/>
            <person name="Sun H."/>
            <person name="Bradshaw-Cordum H."/>
            <person name="Ali J."/>
            <person name="Carter J."/>
            <person name="Cordes M."/>
            <person name="Harris A."/>
            <person name="Isak A."/>
            <person name="van Brunt A."/>
            <person name="Nguyen C."/>
            <person name="Du F."/>
            <person name="Courtney L."/>
            <person name="Kalicki J."/>
            <person name="Ozersky P."/>
            <person name="Abbott S."/>
            <person name="Armstrong J."/>
            <person name="Belter E.A."/>
            <person name="Caruso L."/>
            <person name="Cedroni M."/>
            <person name="Cotton M."/>
            <person name="Davidson T."/>
            <person name="Desai A."/>
            <person name="Elliott G."/>
            <person name="Erb T."/>
            <person name="Fronick C."/>
            <person name="Gaige T."/>
            <person name="Haakenson W."/>
            <person name="Haglund K."/>
            <person name="Holmes A."/>
            <person name="Harkins R."/>
            <person name="Kim K."/>
            <person name="Kruchowski S.S."/>
            <person name="Strong C.M."/>
            <person name="Grewal N."/>
            <person name="Goyea E."/>
            <person name="Hou S."/>
            <person name="Levy A."/>
            <person name="Martinka S."/>
            <person name="Mead K."/>
            <person name="McLellan M.D."/>
            <person name="Meyer R."/>
            <person name="Randall-Maher J."/>
            <person name="Tomlinson C."/>
            <person name="Dauphin-Kohlberg S."/>
            <person name="Kozlowicz-Reilly A."/>
            <person name="Shah N."/>
            <person name="Swearengen-Shahid S."/>
            <person name="Snider J."/>
            <person name="Strong J.T."/>
            <person name="Thompson J."/>
            <person name="Yoakum M."/>
            <person name="Leonard S."/>
            <person name="Pearman C."/>
            <person name="Trani L."/>
            <person name="Radionenko M."/>
            <person name="Waligorski J.E."/>
            <person name="Wang C."/>
            <person name="Rock S.M."/>
            <person name="Tin-Wollam A.-M."/>
            <person name="Maupin R."/>
            <person name="Latreille P."/>
            <person name="Wendl M.C."/>
            <person name="Yang S.-P."/>
            <person name="Pohl C."/>
            <person name="Wallis J.W."/>
            <person name="Spieth J."/>
            <person name="Bieri T.A."/>
            <person name="Berkowicz N."/>
            <person name="Nelson J.O."/>
            <person name="Osborne J."/>
            <person name="Ding L."/>
            <person name="Meyer R."/>
            <person name="Sabo A."/>
            <person name="Shotland Y."/>
            <person name="Sinha P."/>
            <person name="Wohldmann P.E."/>
            <person name="Cook L.L."/>
            <person name="Hickenbotham M.T."/>
            <person name="Eldred J."/>
            <person name="Williams D."/>
            <person name="Jones T.A."/>
            <person name="She X."/>
            <person name="Ciccarelli F.D."/>
            <person name="Izaurralde E."/>
            <person name="Taylor J."/>
            <person name="Schmutz J."/>
            <person name="Myers R.M."/>
            <person name="Cox D.R."/>
            <person name="Huang X."/>
            <person name="McPherson J.D."/>
            <person name="Mardis E.R."/>
            <person name="Clifton S.W."/>
            <person name="Warren W.C."/>
            <person name="Chinwalla A.T."/>
            <person name="Eddy S.R."/>
            <person name="Marra M.A."/>
            <person name="Ovcharenko I."/>
            <person name="Furey T.S."/>
            <person name="Miller W."/>
            <person name="Eichler E.E."/>
            <person name="Bork P."/>
            <person name="Suyama M."/>
            <person name="Torrents D."/>
            <person name="Waterston R.H."/>
            <person name="Wilson R.K."/>
        </authorList>
    </citation>
    <scope>NUCLEOTIDE SEQUENCE [LARGE SCALE GENOMIC DNA]</scope>
</reference>
<reference key="5">
    <citation type="submission" date="2005-09" db="EMBL/GenBank/DDBJ databases">
        <authorList>
            <person name="Mural R.J."/>
            <person name="Istrail S."/>
            <person name="Sutton G.G."/>
            <person name="Florea L."/>
            <person name="Halpern A.L."/>
            <person name="Mobarry C.M."/>
            <person name="Lippert R."/>
            <person name="Walenz B."/>
            <person name="Shatkay H."/>
            <person name="Dew I."/>
            <person name="Miller J.R."/>
            <person name="Flanigan M.J."/>
            <person name="Edwards N.J."/>
            <person name="Bolanos R."/>
            <person name="Fasulo D."/>
            <person name="Halldorsson B.V."/>
            <person name="Hannenhalli S."/>
            <person name="Turner R."/>
            <person name="Yooseph S."/>
            <person name="Lu F."/>
            <person name="Nusskern D.R."/>
            <person name="Shue B.C."/>
            <person name="Zheng X.H."/>
            <person name="Zhong F."/>
            <person name="Delcher A.L."/>
            <person name="Huson D.H."/>
            <person name="Kravitz S.A."/>
            <person name="Mouchard L."/>
            <person name="Reinert K."/>
            <person name="Remington K.A."/>
            <person name="Clark A.G."/>
            <person name="Waterman M.S."/>
            <person name="Eichler E.E."/>
            <person name="Adams M.D."/>
            <person name="Hunkapiller M.W."/>
            <person name="Myers E.W."/>
            <person name="Venter J.C."/>
        </authorList>
    </citation>
    <scope>NUCLEOTIDE SEQUENCE [LARGE SCALE GENOMIC DNA]</scope>
</reference>
<reference key="6">
    <citation type="journal article" date="2004" name="Genome Res.">
        <title>The status, quality, and expansion of the NIH full-length cDNA project: the Mammalian Gene Collection (MGC).</title>
        <authorList>
            <consortium name="The MGC Project Team"/>
        </authorList>
    </citation>
    <scope>NUCLEOTIDE SEQUENCE [LARGE SCALE MRNA] (ISOFORM 2)</scope>
</reference>
<reference key="7">
    <citation type="journal article" date="1999" name="J. Virol.">
        <title>Analysis of the effect of natural sequence variation in Tat and in cyclin T on the formation and RNA binding properties of Tat-cyclin T complexes.</title>
        <authorList>
            <person name="Bieniasz P.D."/>
            <person name="Grdina T.A."/>
            <person name="Bogerd H.P."/>
            <person name="Cullen B.R."/>
        </authorList>
    </citation>
    <scope>INTERACTION WITH HIV-2 AND SIV TAT (MICROBIAL INFECTION)</scope>
    <scope>MUTAGENESIS OF ASN-260</scope>
</reference>
<reference key="8">
    <citation type="journal article" date="2001" name="Nature">
        <title>7SK small nuclear RNA binds to and inhibits the activity of CDK9/cyclin T complexes.</title>
        <authorList>
            <person name="Nguyen V.T."/>
            <person name="Kiss T."/>
            <person name="Michels A.A."/>
            <person name="Bensaude O."/>
        </authorList>
    </citation>
    <scope>FUNCTION</scope>
</reference>
<reference key="9">
    <citation type="journal article" date="2002" name="Oncogene">
        <title>Physical interaction between pRb and cdk9/cyclinT2 complex.</title>
        <authorList>
            <person name="Simone C."/>
            <person name="Bagella L."/>
            <person name="Bellan C."/>
            <person name="Giordano A."/>
        </authorList>
    </citation>
    <scope>INTERACTION WITH RB1</scope>
</reference>
<reference key="10">
    <citation type="journal article" date="2004" name="Gene">
        <title>Transcriptional activity and substrate recognition of cyclin T2 from P-TEFb.</title>
        <authorList>
            <person name="Kurosu T."/>
            <person name="Zhang F."/>
            <person name="Peterlin B.M."/>
        </authorList>
    </citation>
    <scope>INTERACTION WITH POLR2A</scope>
    <scope>FUNCTION</scope>
    <scope>REGION</scope>
</reference>
<reference key="11">
    <citation type="journal article" date="2006" name="J. Cell. Physiol.">
        <title>Pkn is a novel partner of cyclin T2a in muscle differentiation.</title>
        <authorList>
            <person name="Cottone G."/>
            <person name="Baldi A."/>
            <person name="Palescandolo E."/>
            <person name="Manente L."/>
            <person name="Penta R."/>
            <person name="Paggi M.G."/>
            <person name="De Luca A."/>
        </authorList>
    </citation>
    <scope>FUNCTION</scope>
    <scope>INTERACTION WITH CDK9 AND PKN1</scope>
</reference>
<reference key="12">
    <citation type="journal article" date="2007" name="J. Mol. Biol.">
        <title>Developmental regulators containing the I-mfa domain interact with T cyclins and Tat and modulate transcription.</title>
        <authorList>
            <person name="Wang Q."/>
            <person name="Young T.M."/>
            <person name="Mathews M.B."/>
            <person name="Pe'ery T."/>
        </authorList>
    </citation>
    <scope>INTERACTION WITH MDFI AND MDFIC</scope>
    <scope>REGION</scope>
</reference>
<reference key="13">
    <citation type="journal article" date="2008" name="Mol. Cell">
        <title>Kinase-selective enrichment enables quantitative phosphoproteomics of the kinome across the cell cycle.</title>
        <authorList>
            <person name="Daub H."/>
            <person name="Olsen J.V."/>
            <person name="Bairlein M."/>
            <person name="Gnad F."/>
            <person name="Oppermann F.S."/>
            <person name="Korner R."/>
            <person name="Greff Z."/>
            <person name="Keri G."/>
            <person name="Stemmann O."/>
            <person name="Mann M."/>
        </authorList>
    </citation>
    <scope>PHOSPHORYLATION [LARGE SCALE ANALYSIS] AT SER-601</scope>
    <scope>IDENTIFICATION BY MASS SPECTROMETRY [LARGE SCALE ANALYSIS]</scope>
    <source>
        <tissue>Cervix carcinoma</tissue>
    </source>
</reference>
<reference key="14">
    <citation type="journal article" date="2008" name="Proc. Natl. Acad. Sci. U.S.A.">
        <title>A quantitative atlas of mitotic phosphorylation.</title>
        <authorList>
            <person name="Dephoure N."/>
            <person name="Zhou C."/>
            <person name="Villen J."/>
            <person name="Beausoleil S.A."/>
            <person name="Bakalarski C.E."/>
            <person name="Elledge S.J."/>
            <person name="Gygi S.P."/>
        </authorList>
    </citation>
    <scope>IDENTIFICATION BY MASS SPECTROMETRY [LARGE SCALE ANALYSIS]</scope>
    <source>
        <tissue>Cervix carcinoma</tissue>
    </source>
</reference>
<reference key="15">
    <citation type="journal article" date="2009" name="Anal. Chem.">
        <title>Lys-N and trypsin cover complementary parts of the phosphoproteome in a refined SCX-based approach.</title>
        <authorList>
            <person name="Gauci S."/>
            <person name="Helbig A.O."/>
            <person name="Slijper M."/>
            <person name="Krijgsveld J."/>
            <person name="Heck A.J."/>
            <person name="Mohammed S."/>
        </authorList>
    </citation>
    <scope>IDENTIFICATION BY MASS SPECTROMETRY [LARGE SCALE ANALYSIS]</scope>
</reference>
<reference key="16">
    <citation type="journal article" date="2009" name="Mol. Cell. Proteomics">
        <title>Large-scale proteomics analysis of the human kinome.</title>
        <authorList>
            <person name="Oppermann F.S."/>
            <person name="Gnad F."/>
            <person name="Olsen J.V."/>
            <person name="Hornberger R."/>
            <person name="Greff Z."/>
            <person name="Keri G."/>
            <person name="Mann M."/>
            <person name="Daub H."/>
        </authorList>
    </citation>
    <scope>PHOSPHORYLATION [LARGE SCALE ANALYSIS] AT SER-601</scope>
    <scope>IDENTIFICATION BY MASS SPECTROMETRY [LARGE SCALE ANALYSIS]</scope>
</reference>
<reference key="17">
    <citation type="journal article" date="2009" name="Sci. Signal.">
        <title>Quantitative phosphoproteomic analysis of T cell receptor signaling reveals system-wide modulation of protein-protein interactions.</title>
        <authorList>
            <person name="Mayya V."/>
            <person name="Lundgren D.H."/>
            <person name="Hwang S.-I."/>
            <person name="Rezaul K."/>
            <person name="Wu L."/>
            <person name="Eng J.K."/>
            <person name="Rodionov V."/>
            <person name="Han D.K."/>
        </authorList>
    </citation>
    <scope>PHOSPHORYLATION [LARGE SCALE ANALYSIS] AT SER-601</scope>
    <scope>IDENTIFICATION BY MASS SPECTROMETRY [LARGE SCALE ANALYSIS]</scope>
    <source>
        <tissue>Leukemic T-cell</tissue>
    </source>
</reference>
<reference key="18">
    <citation type="journal article" date="2010" name="J. Mol. Biol.">
        <title>Specificity of Hexim1 and Hexim2 complex formation with cyclin T1/T2, importin alpha and 7SK snRNA.</title>
        <authorList>
            <person name="Czudnochowski N."/>
            <person name="Vollmuth F."/>
            <person name="Baumann S."/>
            <person name="Vogel-Bachmayr K."/>
            <person name="Geyer M."/>
        </authorList>
    </citation>
    <scope>INTERACTION WITH HEXIM1 AND HEXIM2</scope>
</reference>
<reference key="19">
    <citation type="journal article" date="2011" name="Sci. China Life Sci.">
        <title>HSV-1 stimulation-related protein HSRG1 inhibits viral gene transcriptional elongation by interacting with Cyclin T2.</title>
        <authorList>
            <person name="Wu W."/>
            <person name="Yu X."/>
            <person name="Li W."/>
            <person name="Guo L."/>
            <person name="Liu L."/>
            <person name="Wang L."/>
            <person name="Li Q."/>
        </authorList>
    </citation>
    <scope>INTERACTION WITH MON1B</scope>
    <scope>FUNCTION (MICROBIAL INFECTION)</scope>
</reference>
<reference key="20">
    <citation type="journal article" date="2011" name="Sci. Signal.">
        <title>System-wide temporal characterization of the proteome and phosphoproteome of human embryonic stem cell differentiation.</title>
        <authorList>
            <person name="Rigbolt K.T."/>
            <person name="Prokhorova T.A."/>
            <person name="Akimov V."/>
            <person name="Henningsen J."/>
            <person name="Johansen P.T."/>
            <person name="Kratchmarova I."/>
            <person name="Kassem M."/>
            <person name="Mann M."/>
            <person name="Olsen J.V."/>
            <person name="Blagoev B."/>
        </authorList>
    </citation>
    <scope>PHOSPHORYLATION [LARGE SCALE ANALYSIS] AT SER-480</scope>
    <scope>IDENTIFICATION BY MASS SPECTROMETRY [LARGE SCALE ANALYSIS]</scope>
</reference>
<reference key="21">
    <citation type="journal article" date="2013" name="J. Proteome Res.">
        <title>Toward a comprehensive characterization of a human cancer cell phosphoproteome.</title>
        <authorList>
            <person name="Zhou H."/>
            <person name="Di Palma S."/>
            <person name="Preisinger C."/>
            <person name="Peng M."/>
            <person name="Polat A.N."/>
            <person name="Heck A.J."/>
            <person name="Mohammed S."/>
        </authorList>
    </citation>
    <scope>PHOSPHORYLATION [LARGE SCALE ANALYSIS] AT SER-480</scope>
    <scope>IDENTIFICATION BY MASS SPECTROMETRY [LARGE SCALE ANALYSIS]</scope>
    <source>
        <tissue>Cervix carcinoma</tissue>
        <tissue>Erythroleukemia</tissue>
    </source>
</reference>
<reference key="22">
    <citation type="journal article" date="2014" name="J. Proteomics">
        <title>An enzyme assisted RP-RPLC approach for in-depth analysis of human liver phosphoproteome.</title>
        <authorList>
            <person name="Bian Y."/>
            <person name="Song C."/>
            <person name="Cheng K."/>
            <person name="Dong M."/>
            <person name="Wang F."/>
            <person name="Huang J."/>
            <person name="Sun D."/>
            <person name="Wang L."/>
            <person name="Ye M."/>
            <person name="Zou H."/>
        </authorList>
    </citation>
    <scope>IDENTIFICATION BY MASS SPECTROMETRY [LARGE SCALE ANALYSIS]</scope>
    <source>
        <tissue>Liver</tissue>
    </source>
</reference>
<reference key="23">
    <citation type="journal article" date="2017" name="Nat. Struct. Mol. Biol.">
        <title>Site-specific mapping of the human SUMO proteome reveals co-modification with phosphorylation.</title>
        <authorList>
            <person name="Hendriks I.A."/>
            <person name="Lyon D."/>
            <person name="Young C."/>
            <person name="Jensen L.J."/>
            <person name="Vertegaal A.C."/>
            <person name="Nielsen M.L."/>
        </authorList>
    </citation>
    <scope>SUMOYLATION [LARGE SCALE ANALYSIS] AT LYS-407</scope>
    <scope>IDENTIFICATION BY MASS SPECTROMETRY [LARGE SCALE ANALYSIS]</scope>
</reference>
<name>CCNT2_HUMAN</name>
<dbReference type="EMBL" id="AF048731">
    <property type="protein sequence ID" value="AAC39665.1"/>
    <property type="molecule type" value="mRNA"/>
</dbReference>
<dbReference type="EMBL" id="AF048732">
    <property type="protein sequence ID" value="AAC39666.1"/>
    <property type="molecule type" value="mRNA"/>
</dbReference>
<dbReference type="EMBL" id="AY865621">
    <property type="protein sequence ID" value="AAW56073.1"/>
    <property type="molecule type" value="Genomic_DNA"/>
</dbReference>
<dbReference type="EMBL" id="AK292913">
    <property type="protein sequence ID" value="BAF85602.1"/>
    <property type="molecule type" value="mRNA"/>
</dbReference>
<dbReference type="EMBL" id="AC016725">
    <property type="protein sequence ID" value="AAY14998.1"/>
    <property type="molecule type" value="Genomic_DNA"/>
</dbReference>
<dbReference type="EMBL" id="CH471058">
    <property type="protein sequence ID" value="EAX11644.1"/>
    <property type="molecule type" value="Genomic_DNA"/>
</dbReference>
<dbReference type="EMBL" id="CH471058">
    <property type="protein sequence ID" value="EAX11645.1"/>
    <property type="molecule type" value="Genomic_DNA"/>
</dbReference>
<dbReference type="EMBL" id="CH471058">
    <property type="protein sequence ID" value="EAX11646.1"/>
    <property type="molecule type" value="Genomic_DNA"/>
</dbReference>
<dbReference type="EMBL" id="CH471058">
    <property type="protein sequence ID" value="EAX11647.1"/>
    <property type="molecule type" value="Genomic_DNA"/>
</dbReference>
<dbReference type="EMBL" id="BC114366">
    <property type="protein sequence ID" value="AAI14367.1"/>
    <property type="molecule type" value="mRNA"/>
</dbReference>
<dbReference type="CCDS" id="CCDS2174.1">
    <molecule id="O60583-1"/>
</dbReference>
<dbReference type="CCDS" id="CCDS2175.1">
    <molecule id="O60583-2"/>
</dbReference>
<dbReference type="RefSeq" id="NP_001232.1">
    <molecule id="O60583-2"/>
    <property type="nucleotide sequence ID" value="NM_001241.4"/>
</dbReference>
<dbReference type="RefSeq" id="NP_490595.1">
    <molecule id="O60583-1"/>
    <property type="nucleotide sequence ID" value="NM_058241.3"/>
</dbReference>
<dbReference type="PDB" id="2IVX">
    <property type="method" value="X-ray"/>
    <property type="resolution" value="1.80 A"/>
    <property type="chains" value="A/B=7-263"/>
</dbReference>
<dbReference type="PDBsum" id="2IVX"/>
<dbReference type="SMR" id="O60583"/>
<dbReference type="BioGRID" id="107344">
    <property type="interactions" value="61"/>
</dbReference>
<dbReference type="ComplexPortal" id="CPX-321">
    <molecule id="O60583-2"/>
    <property type="entry name" value="Positive transcription elongation factor B, CDK9-cyclinT2a complex"/>
</dbReference>
<dbReference type="ComplexPortal" id="CPX-322">
    <molecule id="O60583-1"/>
    <property type="entry name" value="Positive transcription elongation factor B, CDK9-cyclinT2b complex"/>
</dbReference>
<dbReference type="CORUM" id="O60583"/>
<dbReference type="ELM" id="O60583"/>
<dbReference type="FunCoup" id="O60583">
    <property type="interactions" value="4557"/>
</dbReference>
<dbReference type="IntAct" id="O60583">
    <property type="interactions" value="25"/>
</dbReference>
<dbReference type="MINT" id="O60583"/>
<dbReference type="STRING" id="9606.ENSP00000264157"/>
<dbReference type="BindingDB" id="O60583"/>
<dbReference type="ChEMBL" id="CHEMBL1293321"/>
<dbReference type="iPTMnet" id="O60583"/>
<dbReference type="PhosphoSitePlus" id="O60583"/>
<dbReference type="BioMuta" id="CCNT2"/>
<dbReference type="jPOST" id="O60583"/>
<dbReference type="MassIVE" id="O60583"/>
<dbReference type="PaxDb" id="9606-ENSP00000264157"/>
<dbReference type="PeptideAtlas" id="O60583"/>
<dbReference type="ProteomicsDB" id="49477">
    <molecule id="O60583-1"/>
</dbReference>
<dbReference type="ProteomicsDB" id="49478">
    <molecule id="O60583-2"/>
</dbReference>
<dbReference type="Pumba" id="O60583"/>
<dbReference type="Antibodypedia" id="1420">
    <property type="antibodies" value="113 antibodies from 27 providers"/>
</dbReference>
<dbReference type="DNASU" id="905"/>
<dbReference type="Ensembl" id="ENST00000264157.10">
    <molecule id="O60583-1"/>
    <property type="protein sequence ID" value="ENSP00000264157.5"/>
    <property type="gene ID" value="ENSG00000082258.13"/>
</dbReference>
<dbReference type="Ensembl" id="ENST00000295238.11">
    <molecule id="O60583-2"/>
    <property type="protein sequence ID" value="ENSP00000295238.6"/>
    <property type="gene ID" value="ENSG00000082258.13"/>
</dbReference>
<dbReference type="GeneID" id="905"/>
<dbReference type="KEGG" id="hsa:905"/>
<dbReference type="MANE-Select" id="ENST00000264157.10">
    <property type="protein sequence ID" value="ENSP00000264157.5"/>
    <property type="RefSeq nucleotide sequence ID" value="NM_058241.3"/>
    <property type="RefSeq protein sequence ID" value="NP_490595.1"/>
</dbReference>
<dbReference type="UCSC" id="uc002tub.3">
    <molecule id="O60583-1"/>
    <property type="organism name" value="human"/>
</dbReference>
<dbReference type="AGR" id="HGNC:1600"/>
<dbReference type="CTD" id="905"/>
<dbReference type="DisGeNET" id="905"/>
<dbReference type="GeneCards" id="CCNT2"/>
<dbReference type="HGNC" id="HGNC:1600">
    <property type="gene designation" value="CCNT2"/>
</dbReference>
<dbReference type="HPA" id="ENSG00000082258">
    <property type="expression patterns" value="Low tissue specificity"/>
</dbReference>
<dbReference type="MIM" id="603862">
    <property type="type" value="gene"/>
</dbReference>
<dbReference type="neXtProt" id="NX_O60583"/>
<dbReference type="OpenTargets" id="ENSG00000082258"/>
<dbReference type="PharmGKB" id="PA26164"/>
<dbReference type="VEuPathDB" id="HostDB:ENSG00000082258"/>
<dbReference type="eggNOG" id="KOG0834">
    <property type="taxonomic scope" value="Eukaryota"/>
</dbReference>
<dbReference type="GeneTree" id="ENSGT00940000155759"/>
<dbReference type="HOGENOM" id="CLU_012994_1_1_1"/>
<dbReference type="InParanoid" id="O60583"/>
<dbReference type="OMA" id="SCSVKQY"/>
<dbReference type="OrthoDB" id="25002at2759"/>
<dbReference type="PAN-GO" id="O60583">
    <property type="GO annotations" value="5 GO annotations based on evolutionary models"/>
</dbReference>
<dbReference type="PhylomeDB" id="O60583"/>
<dbReference type="TreeFam" id="TF101014"/>
<dbReference type="PathwayCommons" id="O60583"/>
<dbReference type="Reactome" id="R-HSA-112382">
    <property type="pathway name" value="Formation of RNA Pol II elongation complex"/>
</dbReference>
<dbReference type="Reactome" id="R-HSA-167152">
    <property type="pathway name" value="Formation of HIV elongation complex in the absence of HIV Tat"/>
</dbReference>
<dbReference type="Reactome" id="R-HSA-167287">
    <property type="pathway name" value="HIV elongation arrest and recovery"/>
</dbReference>
<dbReference type="Reactome" id="R-HSA-167290">
    <property type="pathway name" value="Pausing and recovery of HIV elongation"/>
</dbReference>
<dbReference type="Reactome" id="R-HSA-2173796">
    <property type="pathway name" value="SMAD2/SMAD3:SMAD4 heterotrimer regulates transcription"/>
</dbReference>
<dbReference type="Reactome" id="R-HSA-674695">
    <property type="pathway name" value="RNA Polymerase II Pre-transcription Events"/>
</dbReference>
<dbReference type="Reactome" id="R-HSA-6796648">
    <property type="pathway name" value="TP53 Regulates Transcription of DNA Repair Genes"/>
</dbReference>
<dbReference type="Reactome" id="R-HSA-6807505">
    <property type="pathway name" value="RNA polymerase II transcribes snRNA genes"/>
</dbReference>
<dbReference type="Reactome" id="R-HSA-75955">
    <property type="pathway name" value="RNA Polymerase II Transcription Elongation"/>
</dbReference>
<dbReference type="SignaLink" id="O60583"/>
<dbReference type="BioGRID-ORCS" id="905">
    <property type="hits" value="31 hits in 1168 CRISPR screens"/>
</dbReference>
<dbReference type="ChiTaRS" id="CCNT2">
    <property type="organism name" value="human"/>
</dbReference>
<dbReference type="EvolutionaryTrace" id="O60583"/>
<dbReference type="GeneWiki" id="Cyclin_T2"/>
<dbReference type="GenomeRNAi" id="905"/>
<dbReference type="Pharos" id="O60583">
    <property type="development level" value="Tbio"/>
</dbReference>
<dbReference type="PRO" id="PR:O60583"/>
<dbReference type="Proteomes" id="UP000005640">
    <property type="component" value="Chromosome 2"/>
</dbReference>
<dbReference type="RNAct" id="O60583">
    <property type="molecule type" value="protein"/>
</dbReference>
<dbReference type="Bgee" id="ENSG00000082258">
    <property type="expression patterns" value="Expressed in adrenal tissue and 200 other cell types or tissues"/>
</dbReference>
<dbReference type="ExpressionAtlas" id="O60583">
    <property type="expression patterns" value="baseline and differential"/>
</dbReference>
<dbReference type="GO" id="GO:0008024">
    <property type="term" value="C:cyclin/CDK positive transcription elongation factor complex"/>
    <property type="evidence" value="ECO:0000314"/>
    <property type="project" value="UniProtKB"/>
</dbReference>
<dbReference type="GO" id="GO:0005654">
    <property type="term" value="C:nucleoplasm"/>
    <property type="evidence" value="ECO:0000304"/>
    <property type="project" value="Reactome"/>
</dbReference>
<dbReference type="GO" id="GO:0005634">
    <property type="term" value="C:nucleus"/>
    <property type="evidence" value="ECO:0000314"/>
    <property type="project" value="ComplexPortal"/>
</dbReference>
<dbReference type="GO" id="GO:0048471">
    <property type="term" value="C:perinuclear region of cytoplasm"/>
    <property type="evidence" value="ECO:0007669"/>
    <property type="project" value="UniProtKB-SubCell"/>
</dbReference>
<dbReference type="GO" id="GO:0097322">
    <property type="term" value="F:7SK snRNA binding"/>
    <property type="evidence" value="ECO:0000314"/>
    <property type="project" value="UniProtKB"/>
</dbReference>
<dbReference type="GO" id="GO:0003682">
    <property type="term" value="F:chromatin binding"/>
    <property type="evidence" value="ECO:0000250"/>
    <property type="project" value="UniProtKB"/>
</dbReference>
<dbReference type="GO" id="GO:0061575">
    <property type="term" value="F:cyclin-dependent protein serine/threonine kinase activator activity"/>
    <property type="evidence" value="ECO:0000318"/>
    <property type="project" value="GO_Central"/>
</dbReference>
<dbReference type="GO" id="GO:0019901">
    <property type="term" value="F:protein kinase binding"/>
    <property type="evidence" value="ECO:0000353"/>
    <property type="project" value="UniProtKB"/>
</dbReference>
<dbReference type="GO" id="GO:0070063">
    <property type="term" value="F:RNA polymerase binding"/>
    <property type="evidence" value="ECO:0000353"/>
    <property type="project" value="UniProtKB"/>
</dbReference>
<dbReference type="GO" id="GO:0001223">
    <property type="term" value="F:transcription coactivator binding"/>
    <property type="evidence" value="ECO:0000353"/>
    <property type="project" value="UniProtKB"/>
</dbReference>
<dbReference type="GO" id="GO:0051301">
    <property type="term" value="P:cell division"/>
    <property type="evidence" value="ECO:0007669"/>
    <property type="project" value="UniProtKB-KW"/>
</dbReference>
<dbReference type="GO" id="GO:0019085">
    <property type="term" value="P:early viral transcription"/>
    <property type="evidence" value="ECO:0000314"/>
    <property type="project" value="UniProtKB"/>
</dbReference>
<dbReference type="GO" id="GO:0019086">
    <property type="term" value="P:late viral transcription"/>
    <property type="evidence" value="ECO:0000314"/>
    <property type="project" value="UniProtKB"/>
</dbReference>
<dbReference type="GO" id="GO:0043923">
    <property type="term" value="P:positive regulation by host of viral transcription"/>
    <property type="evidence" value="ECO:0000250"/>
    <property type="project" value="ComplexPortal"/>
</dbReference>
<dbReference type="GO" id="GO:0032786">
    <property type="term" value="P:positive regulation of DNA-templated transcription, elongation"/>
    <property type="evidence" value="ECO:0000318"/>
    <property type="project" value="GO_Central"/>
</dbReference>
<dbReference type="GO" id="GO:0045944">
    <property type="term" value="P:positive regulation of transcription by RNA polymerase II"/>
    <property type="evidence" value="ECO:0000314"/>
    <property type="project" value="UniProtKB"/>
</dbReference>
<dbReference type="GO" id="GO:0032968">
    <property type="term" value="P:positive regulation of transcription elongation by RNA polymerase II"/>
    <property type="evidence" value="ECO:0000314"/>
    <property type="project" value="ComplexPortal"/>
</dbReference>
<dbReference type="GO" id="GO:0000079">
    <property type="term" value="P:regulation of cyclin-dependent protein serine/threonine kinase activity"/>
    <property type="evidence" value="ECO:0000304"/>
    <property type="project" value="ProtInc"/>
</dbReference>
<dbReference type="GO" id="GO:0051147">
    <property type="term" value="P:regulation of muscle cell differentiation"/>
    <property type="evidence" value="ECO:0000314"/>
    <property type="project" value="UniProtKB"/>
</dbReference>
<dbReference type="GO" id="GO:0007519">
    <property type="term" value="P:skeletal muscle tissue development"/>
    <property type="evidence" value="ECO:0007669"/>
    <property type="project" value="Ensembl"/>
</dbReference>
<dbReference type="GO" id="GO:0006366">
    <property type="term" value="P:transcription by RNA polymerase II"/>
    <property type="evidence" value="ECO:0000304"/>
    <property type="project" value="ProtInc"/>
</dbReference>
<dbReference type="CDD" id="cd20596">
    <property type="entry name" value="CYCLIN_CCNT2_rpt1"/>
    <property type="match status" value="1"/>
</dbReference>
<dbReference type="CDD" id="cd20598">
    <property type="entry name" value="CYCLIN_CCNT2_rpt2"/>
    <property type="match status" value="1"/>
</dbReference>
<dbReference type="FunFam" id="1.10.472.10:FF:000004">
    <property type="entry name" value="Cyclin T2"/>
    <property type="match status" value="1"/>
</dbReference>
<dbReference type="FunFam" id="1.10.472.10:FF:000009">
    <property type="entry name" value="cyclin-T2 isoform X1"/>
    <property type="match status" value="1"/>
</dbReference>
<dbReference type="Gene3D" id="1.10.472.10">
    <property type="entry name" value="Cyclin-like"/>
    <property type="match status" value="2"/>
</dbReference>
<dbReference type="InterPro" id="IPR013763">
    <property type="entry name" value="Cyclin-like_dom"/>
</dbReference>
<dbReference type="InterPro" id="IPR036915">
    <property type="entry name" value="Cyclin-like_sf"/>
</dbReference>
<dbReference type="InterPro" id="IPR043198">
    <property type="entry name" value="Cyclin/Ssn8"/>
</dbReference>
<dbReference type="InterPro" id="IPR047321">
    <property type="entry name" value="CYCLIN_CCNT2_rpt1"/>
</dbReference>
<dbReference type="InterPro" id="IPR047322">
    <property type="entry name" value="CYCLIN_CCNT2_rpt2"/>
</dbReference>
<dbReference type="InterPro" id="IPR006671">
    <property type="entry name" value="Cyclin_N"/>
</dbReference>
<dbReference type="PANTHER" id="PTHR10026">
    <property type="entry name" value="CYCLIN"/>
    <property type="match status" value="1"/>
</dbReference>
<dbReference type="Pfam" id="PF00134">
    <property type="entry name" value="Cyclin_N"/>
    <property type="match status" value="1"/>
</dbReference>
<dbReference type="Pfam" id="PF21797">
    <property type="entry name" value="CycT2-like_C"/>
    <property type="match status" value="1"/>
</dbReference>
<dbReference type="SMART" id="SM00385">
    <property type="entry name" value="CYCLIN"/>
    <property type="match status" value="2"/>
</dbReference>
<dbReference type="SUPFAM" id="SSF47954">
    <property type="entry name" value="Cyclin-like"/>
    <property type="match status" value="2"/>
</dbReference>
<proteinExistence type="evidence at protein level"/>
<gene>
    <name evidence="16" type="primary">CCNT2</name>
</gene>